<comment type="function">
    <text evidence="1">Catalyzes the folate-dependent formation of 5-methyl-uridine at position 54 (M-5-U54) in all tRNAs.</text>
</comment>
<comment type="catalytic activity">
    <reaction evidence="1">
        <text>uridine(54) in tRNA + (6R)-5,10-methylene-5,6,7,8-tetrahydrofolate + NADH + H(+) = 5-methyluridine(54) in tRNA + (6S)-5,6,7,8-tetrahydrofolate + NAD(+)</text>
        <dbReference type="Rhea" id="RHEA:16873"/>
        <dbReference type="Rhea" id="RHEA-COMP:10167"/>
        <dbReference type="Rhea" id="RHEA-COMP:10193"/>
        <dbReference type="ChEBI" id="CHEBI:15378"/>
        <dbReference type="ChEBI" id="CHEBI:15636"/>
        <dbReference type="ChEBI" id="CHEBI:57453"/>
        <dbReference type="ChEBI" id="CHEBI:57540"/>
        <dbReference type="ChEBI" id="CHEBI:57945"/>
        <dbReference type="ChEBI" id="CHEBI:65315"/>
        <dbReference type="ChEBI" id="CHEBI:74447"/>
        <dbReference type="EC" id="2.1.1.74"/>
    </reaction>
</comment>
<comment type="catalytic activity">
    <reaction evidence="1">
        <text>uridine(54) in tRNA + (6R)-5,10-methylene-5,6,7,8-tetrahydrofolate + NADPH + H(+) = 5-methyluridine(54) in tRNA + (6S)-5,6,7,8-tetrahydrofolate + NADP(+)</text>
        <dbReference type="Rhea" id="RHEA:62372"/>
        <dbReference type="Rhea" id="RHEA-COMP:10167"/>
        <dbReference type="Rhea" id="RHEA-COMP:10193"/>
        <dbReference type="ChEBI" id="CHEBI:15378"/>
        <dbReference type="ChEBI" id="CHEBI:15636"/>
        <dbReference type="ChEBI" id="CHEBI:57453"/>
        <dbReference type="ChEBI" id="CHEBI:57783"/>
        <dbReference type="ChEBI" id="CHEBI:58349"/>
        <dbReference type="ChEBI" id="CHEBI:65315"/>
        <dbReference type="ChEBI" id="CHEBI:74447"/>
        <dbReference type="EC" id="2.1.1.74"/>
    </reaction>
</comment>
<comment type="cofactor">
    <cofactor evidence="1">
        <name>FAD</name>
        <dbReference type="ChEBI" id="CHEBI:57692"/>
    </cofactor>
</comment>
<comment type="subcellular location">
    <subcellularLocation>
        <location evidence="1">Cytoplasm</location>
    </subcellularLocation>
</comment>
<comment type="similarity">
    <text evidence="1">Belongs to the MnmG family. TrmFO subfamily.</text>
</comment>
<evidence type="ECO:0000255" key="1">
    <source>
        <dbReference type="HAMAP-Rule" id="MF_01037"/>
    </source>
</evidence>
<organism>
    <name type="scientific">Streptococcus thermophilus (strain ATCC BAA-250 / LMG 18311)</name>
    <dbReference type="NCBI Taxonomy" id="264199"/>
    <lineage>
        <taxon>Bacteria</taxon>
        <taxon>Bacillati</taxon>
        <taxon>Bacillota</taxon>
        <taxon>Bacilli</taxon>
        <taxon>Lactobacillales</taxon>
        <taxon>Streptococcaceae</taxon>
        <taxon>Streptococcus</taxon>
    </lineage>
</organism>
<reference key="1">
    <citation type="journal article" date="2004" name="Nat. Biotechnol.">
        <title>Complete sequence and comparative genome analysis of the dairy bacterium Streptococcus thermophilus.</title>
        <authorList>
            <person name="Bolotin A."/>
            <person name="Quinquis B."/>
            <person name="Renault P."/>
            <person name="Sorokin A."/>
            <person name="Ehrlich S.D."/>
            <person name="Kulakauskas S."/>
            <person name="Lapidus A."/>
            <person name="Goltsman E."/>
            <person name="Mazur M."/>
            <person name="Pusch G.D."/>
            <person name="Fonstein M."/>
            <person name="Overbeek R."/>
            <person name="Kyprides N."/>
            <person name="Purnelle B."/>
            <person name="Prozzi D."/>
            <person name="Ngui K."/>
            <person name="Masuy D."/>
            <person name="Hancy F."/>
            <person name="Burteau S."/>
            <person name="Boutry M."/>
            <person name="Delcour J."/>
            <person name="Goffeau A."/>
            <person name="Hols P."/>
        </authorList>
    </citation>
    <scope>NUCLEOTIDE SEQUENCE [LARGE SCALE GENOMIC DNA]</scope>
    <source>
        <strain>ATCC BAA-250 / LMG 18311</strain>
    </source>
</reference>
<proteinExistence type="inferred from homology"/>
<protein>
    <recommendedName>
        <fullName evidence="1">Methylenetetrahydrofolate--tRNA-(uracil-5-)-methyltransferase TrmFO</fullName>
        <ecNumber evidence="1">2.1.1.74</ecNumber>
    </recommendedName>
    <alternativeName>
        <fullName evidence="1">Folate-dependent tRNA (uracil-5-)-methyltransferase</fullName>
    </alternativeName>
    <alternativeName>
        <fullName evidence="1">Folate-dependent tRNA(M-5-U54)-methyltransferase</fullName>
    </alternativeName>
</protein>
<name>TRMFO_STRT2</name>
<gene>
    <name evidence="1" type="primary">trmFO</name>
    <name type="synonym">gid</name>
    <name type="ordered locus">stu0903</name>
</gene>
<sequence>MSQSKADYINVIGAGLAGSEAAYQIAKRGIPVKLYEMRGVKATPQHKTTNFAELVCSNSFRGDSLTNAVGLLKEEMRRLDSIIMRNGEAHRVPAGGAMAVDREGYAEAVTAEIESHPLIEVIRKEITEIPDDAITVIASGPLTSDALAEKIHELNGGDGFYFYDAAAPIVDKATIDMNKVYLKSRYDKGEAAYLNCPMTKEEFMAFYEALTTAEEAPLNSFEKEKYFEGCMPIEVMAKRGIKTMLYGPMKPVGLEYPEDYMGPRDGDFKTPYAVVQLRQDNAAGSLYNIVGFQTHLKWGEQKRVFQMIPGLENAEFVRYGVMHRNSYMDSPNLLKQTFQSKSNPNLFFAGQMTGVEGYVESAASGLVAGINAARLFKGEDEVIFPHTTAIGSLPYYVTHAESKHFQPMNVNFGIIKELEGPRIRDKKERYEKIAERSLKDLQTFIDA</sequence>
<feature type="chain" id="PRO_0000117278" description="Methylenetetrahydrofolate--tRNA-(uracil-5-)-methyltransferase TrmFO">
    <location>
        <begin position="1"/>
        <end position="447"/>
    </location>
</feature>
<feature type="binding site" evidence="1">
    <location>
        <begin position="13"/>
        <end position="18"/>
    </location>
    <ligand>
        <name>FAD</name>
        <dbReference type="ChEBI" id="CHEBI:57692"/>
    </ligand>
</feature>
<accession>Q5M4M7</accession>
<dbReference type="EC" id="2.1.1.74" evidence="1"/>
<dbReference type="EMBL" id="CP000023">
    <property type="protein sequence ID" value="AAV60570.1"/>
    <property type="molecule type" value="Genomic_DNA"/>
</dbReference>
<dbReference type="RefSeq" id="WP_011225892.1">
    <property type="nucleotide sequence ID" value="NC_006448.1"/>
</dbReference>
<dbReference type="SMR" id="Q5M4M7"/>
<dbReference type="STRING" id="264199.stu0903"/>
<dbReference type="KEGG" id="stl:stu0903"/>
<dbReference type="eggNOG" id="COG1206">
    <property type="taxonomic scope" value="Bacteria"/>
</dbReference>
<dbReference type="HOGENOM" id="CLU_033057_1_0_9"/>
<dbReference type="Proteomes" id="UP000001170">
    <property type="component" value="Chromosome"/>
</dbReference>
<dbReference type="GO" id="GO:0005829">
    <property type="term" value="C:cytosol"/>
    <property type="evidence" value="ECO:0007669"/>
    <property type="project" value="TreeGrafter"/>
</dbReference>
<dbReference type="GO" id="GO:0050660">
    <property type="term" value="F:flavin adenine dinucleotide binding"/>
    <property type="evidence" value="ECO:0007669"/>
    <property type="project" value="UniProtKB-UniRule"/>
</dbReference>
<dbReference type="GO" id="GO:0047151">
    <property type="term" value="F:tRNA (uracil(54)-C5)-methyltransferase activity, 5,10-methylenetetrahydrofolate-dependent"/>
    <property type="evidence" value="ECO:0007669"/>
    <property type="project" value="UniProtKB-UniRule"/>
</dbReference>
<dbReference type="GO" id="GO:0030488">
    <property type="term" value="P:tRNA methylation"/>
    <property type="evidence" value="ECO:0007669"/>
    <property type="project" value="TreeGrafter"/>
</dbReference>
<dbReference type="GO" id="GO:0002098">
    <property type="term" value="P:tRNA wobble uridine modification"/>
    <property type="evidence" value="ECO:0007669"/>
    <property type="project" value="TreeGrafter"/>
</dbReference>
<dbReference type="FunFam" id="3.50.50.60:FF:000035">
    <property type="entry name" value="Methylenetetrahydrofolate--tRNA-(uracil-5-)-methyltransferase TrmFO"/>
    <property type="match status" value="1"/>
</dbReference>
<dbReference type="FunFam" id="3.50.50.60:FF:000040">
    <property type="entry name" value="Methylenetetrahydrofolate--tRNA-(uracil-5-)-methyltransferase TrmFO"/>
    <property type="match status" value="1"/>
</dbReference>
<dbReference type="Gene3D" id="3.50.50.60">
    <property type="entry name" value="FAD/NAD(P)-binding domain"/>
    <property type="match status" value="2"/>
</dbReference>
<dbReference type="HAMAP" id="MF_01037">
    <property type="entry name" value="TrmFO"/>
    <property type="match status" value="1"/>
</dbReference>
<dbReference type="InterPro" id="IPR036188">
    <property type="entry name" value="FAD/NAD-bd_sf"/>
</dbReference>
<dbReference type="InterPro" id="IPR002218">
    <property type="entry name" value="MnmG-rel"/>
</dbReference>
<dbReference type="InterPro" id="IPR020595">
    <property type="entry name" value="MnmG-rel_CS"/>
</dbReference>
<dbReference type="InterPro" id="IPR040131">
    <property type="entry name" value="MnmG_N"/>
</dbReference>
<dbReference type="InterPro" id="IPR004417">
    <property type="entry name" value="TrmFO"/>
</dbReference>
<dbReference type="NCBIfam" id="TIGR00137">
    <property type="entry name" value="gid_trmFO"/>
    <property type="match status" value="1"/>
</dbReference>
<dbReference type="NCBIfam" id="NF003739">
    <property type="entry name" value="PRK05335.1"/>
    <property type="match status" value="1"/>
</dbReference>
<dbReference type="PANTHER" id="PTHR11806">
    <property type="entry name" value="GLUCOSE INHIBITED DIVISION PROTEIN A"/>
    <property type="match status" value="1"/>
</dbReference>
<dbReference type="PANTHER" id="PTHR11806:SF2">
    <property type="entry name" value="METHYLENETETRAHYDROFOLATE--TRNA-(URACIL-5-)-METHYLTRANSFERASE TRMFO"/>
    <property type="match status" value="1"/>
</dbReference>
<dbReference type="Pfam" id="PF01134">
    <property type="entry name" value="GIDA"/>
    <property type="match status" value="1"/>
</dbReference>
<dbReference type="SUPFAM" id="SSF51905">
    <property type="entry name" value="FAD/NAD(P)-binding domain"/>
    <property type="match status" value="1"/>
</dbReference>
<dbReference type="PROSITE" id="PS01281">
    <property type="entry name" value="GIDA_2"/>
    <property type="match status" value="1"/>
</dbReference>
<keyword id="KW-0963">Cytoplasm</keyword>
<keyword id="KW-0274">FAD</keyword>
<keyword id="KW-0285">Flavoprotein</keyword>
<keyword id="KW-0489">Methyltransferase</keyword>
<keyword id="KW-0520">NAD</keyword>
<keyword id="KW-0521">NADP</keyword>
<keyword id="KW-1185">Reference proteome</keyword>
<keyword id="KW-0808">Transferase</keyword>
<keyword id="KW-0819">tRNA processing</keyword>